<reference key="1">
    <citation type="journal article" date="2008" name="J. Bacteriol.">
        <title>Complete genome sequence of uropathogenic Proteus mirabilis, a master of both adherence and motility.</title>
        <authorList>
            <person name="Pearson M.M."/>
            <person name="Sebaihia M."/>
            <person name="Churcher C."/>
            <person name="Quail M.A."/>
            <person name="Seshasayee A.S."/>
            <person name="Luscombe N.M."/>
            <person name="Abdellah Z."/>
            <person name="Arrosmith C."/>
            <person name="Atkin B."/>
            <person name="Chillingworth T."/>
            <person name="Hauser H."/>
            <person name="Jagels K."/>
            <person name="Moule S."/>
            <person name="Mungall K."/>
            <person name="Norbertczak H."/>
            <person name="Rabbinowitsch E."/>
            <person name="Walker D."/>
            <person name="Whithead S."/>
            <person name="Thomson N.R."/>
            <person name="Rather P.N."/>
            <person name="Parkhill J."/>
            <person name="Mobley H.L.T."/>
        </authorList>
    </citation>
    <scope>NUCLEOTIDE SEQUENCE [LARGE SCALE GENOMIC DNA]</scope>
    <source>
        <strain>HI4320</strain>
    </source>
</reference>
<comment type="function">
    <text evidence="1">Na(+)/H(+) antiporter that extrudes sodium in exchange for external protons.</text>
</comment>
<comment type="catalytic activity">
    <reaction evidence="1">
        <text>2 Na(+)(in) + 3 H(+)(out) = 2 Na(+)(out) + 3 H(+)(in)</text>
        <dbReference type="Rhea" id="RHEA:29247"/>
        <dbReference type="ChEBI" id="CHEBI:15378"/>
        <dbReference type="ChEBI" id="CHEBI:29101"/>
    </reaction>
    <physiologicalReaction direction="left-to-right" evidence="1">
        <dbReference type="Rhea" id="RHEA:29248"/>
    </physiologicalReaction>
</comment>
<comment type="subcellular location">
    <subcellularLocation>
        <location evidence="1">Cell inner membrane</location>
        <topology evidence="1">Multi-pass membrane protein</topology>
    </subcellularLocation>
</comment>
<comment type="similarity">
    <text evidence="1">Belongs to the NhaB Na(+)/H(+) (TC 2.A.34) antiporter family.</text>
</comment>
<dbReference type="EMBL" id="AM942759">
    <property type="protein sequence ID" value="CAR43175.1"/>
    <property type="molecule type" value="Genomic_DNA"/>
</dbReference>
<dbReference type="RefSeq" id="WP_004243275.1">
    <property type="nucleotide sequence ID" value="NC_010554.1"/>
</dbReference>
<dbReference type="SMR" id="B4EXU4"/>
<dbReference type="EnsemblBacteria" id="CAR43175">
    <property type="protein sequence ID" value="CAR43175"/>
    <property type="gene ID" value="PMI1511"/>
</dbReference>
<dbReference type="GeneID" id="6801340"/>
<dbReference type="KEGG" id="pmr:PMI1511"/>
<dbReference type="eggNOG" id="COG3067">
    <property type="taxonomic scope" value="Bacteria"/>
</dbReference>
<dbReference type="HOGENOM" id="CLU_041110_0_0_6"/>
<dbReference type="Proteomes" id="UP000008319">
    <property type="component" value="Chromosome"/>
</dbReference>
<dbReference type="GO" id="GO:0005886">
    <property type="term" value="C:plasma membrane"/>
    <property type="evidence" value="ECO:0007669"/>
    <property type="project" value="UniProtKB-SubCell"/>
</dbReference>
<dbReference type="GO" id="GO:0015385">
    <property type="term" value="F:sodium:proton antiporter activity"/>
    <property type="evidence" value="ECO:0007669"/>
    <property type="project" value="InterPro"/>
</dbReference>
<dbReference type="HAMAP" id="MF_01599">
    <property type="entry name" value="NhaB"/>
    <property type="match status" value="1"/>
</dbReference>
<dbReference type="InterPro" id="IPR004671">
    <property type="entry name" value="Na+/H+_antiporter_NhaB"/>
</dbReference>
<dbReference type="NCBIfam" id="TIGR00774">
    <property type="entry name" value="NhaB"/>
    <property type="match status" value="1"/>
</dbReference>
<dbReference type="NCBIfam" id="NF007093">
    <property type="entry name" value="PRK09547.1"/>
    <property type="match status" value="1"/>
</dbReference>
<dbReference type="PANTHER" id="PTHR43302:SF1">
    <property type="entry name" value="NA(+)_H(+) ANTIPORTER NHAB"/>
    <property type="match status" value="1"/>
</dbReference>
<dbReference type="PANTHER" id="PTHR43302">
    <property type="entry name" value="TRANSPORTER ARSB-RELATED"/>
    <property type="match status" value="1"/>
</dbReference>
<dbReference type="Pfam" id="PF06450">
    <property type="entry name" value="NhaB"/>
    <property type="match status" value="1"/>
</dbReference>
<gene>
    <name evidence="1" type="primary">nhaB</name>
    <name type="ordered locus">PMI1511</name>
</gene>
<protein>
    <recommendedName>
        <fullName evidence="1">Na(+)/H(+) antiporter NhaB</fullName>
    </recommendedName>
    <alternativeName>
        <fullName evidence="1">Sodium/proton antiporter NhaB</fullName>
    </alternativeName>
</protein>
<evidence type="ECO:0000255" key="1">
    <source>
        <dbReference type="HAMAP-Rule" id="MF_01599"/>
    </source>
</evidence>
<keyword id="KW-0050">Antiport</keyword>
<keyword id="KW-0997">Cell inner membrane</keyword>
<keyword id="KW-1003">Cell membrane</keyword>
<keyword id="KW-0406">Ion transport</keyword>
<keyword id="KW-0472">Membrane</keyword>
<keyword id="KW-1185">Reference proteome</keyword>
<keyword id="KW-0915">Sodium</keyword>
<keyword id="KW-0739">Sodium transport</keyword>
<keyword id="KW-0812">Transmembrane</keyword>
<keyword id="KW-1133">Transmembrane helix</keyword>
<keyword id="KW-0813">Transport</keyword>
<sequence length="514" mass="56813">MDMSIRQALLKNFMGNSPDWYKLAIITFLIINPLIFFFVDPFIAGWLLVVEFIFTLAMALKCYPLQPGGLLAIEAVIIGMTTPKQIGHEIANNLEVILLLVFMVAGIYFMKQLLLFAFTKLLLSIRSKRLLSLAFCFASAFLSAFLDALTVIAVVISVSLGFYSIYHNFASNQADAELSNDGFIDSTEKKQTLEQFRAFLRSLMMHAGVGTALGGVMTMVGEPQNLIIAKHLEWDFVTFFIRMSPVTIPVFFAGLAVCYLVERFKLFGYGAELPELVRKVLTDYDKKNSEKRTQQEKAQLLIQALIGIWLIVALALHLAEVGIIGLSVIILATTFCGITEEHALGKAFEEALPFTALLTVFFSVVAVIIDQQLFGPIIQFVLQASESSQLSLFYLFNGLLSAISDNVFVGTVYISEALSALQEGLISQSQYEHIGVAINTGTNLPSVATPNGQAAFLFLLTSALSPLIRLSYGRMVMMALPYTIVMTLLGLLAVEFWLVPMTHWLYEIGLIAIP</sequence>
<feature type="chain" id="PRO_1000148042" description="Na(+)/H(+) antiporter NhaB">
    <location>
        <begin position="1"/>
        <end position="514"/>
    </location>
</feature>
<feature type="transmembrane region" description="Helical" evidence="1">
    <location>
        <begin position="13"/>
        <end position="33"/>
    </location>
</feature>
<feature type="transmembrane region" description="Helical" evidence="1">
    <location>
        <begin position="34"/>
        <end position="54"/>
    </location>
</feature>
<feature type="transmembrane region" description="Helical" evidence="1">
    <location>
        <begin position="96"/>
        <end position="116"/>
    </location>
</feature>
<feature type="transmembrane region" description="Helical" evidence="1">
    <location>
        <begin position="136"/>
        <end position="156"/>
    </location>
</feature>
<feature type="transmembrane region" description="Helical" evidence="1">
    <location>
        <begin position="203"/>
        <end position="223"/>
    </location>
</feature>
<feature type="transmembrane region" description="Helical" evidence="1">
    <location>
        <begin position="236"/>
        <end position="256"/>
    </location>
</feature>
<feature type="transmembrane region" description="Helical" evidence="1">
    <location>
        <begin position="304"/>
        <end position="324"/>
    </location>
</feature>
<feature type="transmembrane region" description="Helical" evidence="1">
    <location>
        <begin position="349"/>
        <end position="369"/>
    </location>
</feature>
<feature type="transmembrane region" description="Helical" evidence="1">
    <location>
        <begin position="392"/>
        <end position="412"/>
    </location>
</feature>
<feature type="transmembrane region" description="Helical" evidence="1">
    <location>
        <begin position="448"/>
        <end position="468"/>
    </location>
</feature>
<feature type="transmembrane region" description="Helical" evidence="1">
    <location>
        <begin position="479"/>
        <end position="499"/>
    </location>
</feature>
<accession>B4EXU4</accession>
<organism>
    <name type="scientific">Proteus mirabilis (strain HI4320)</name>
    <dbReference type="NCBI Taxonomy" id="529507"/>
    <lineage>
        <taxon>Bacteria</taxon>
        <taxon>Pseudomonadati</taxon>
        <taxon>Pseudomonadota</taxon>
        <taxon>Gammaproteobacteria</taxon>
        <taxon>Enterobacterales</taxon>
        <taxon>Morganellaceae</taxon>
        <taxon>Proteus</taxon>
    </lineage>
</organism>
<name>NHAB_PROMH</name>
<proteinExistence type="inferred from homology"/>